<organism>
    <name type="scientific">Mus musculus</name>
    <name type="common">Mouse</name>
    <dbReference type="NCBI Taxonomy" id="10090"/>
    <lineage>
        <taxon>Eukaryota</taxon>
        <taxon>Metazoa</taxon>
        <taxon>Chordata</taxon>
        <taxon>Craniata</taxon>
        <taxon>Vertebrata</taxon>
        <taxon>Euteleostomi</taxon>
        <taxon>Mammalia</taxon>
        <taxon>Eutheria</taxon>
        <taxon>Euarchontoglires</taxon>
        <taxon>Glires</taxon>
        <taxon>Rodentia</taxon>
        <taxon>Myomorpha</taxon>
        <taxon>Muroidea</taxon>
        <taxon>Muridae</taxon>
        <taxon>Murinae</taxon>
        <taxon>Mus</taxon>
        <taxon>Mus</taxon>
    </lineage>
</organism>
<dbReference type="PIR" id="PH1089">
    <property type="entry name" value="PH1089"/>
</dbReference>
<dbReference type="PDB" id="5A2I">
    <property type="method" value="X-ray"/>
    <property type="resolution" value="1.88 A"/>
    <property type="chains" value="H=20-129"/>
</dbReference>
<dbReference type="PDB" id="5A2J">
    <property type="method" value="X-ray"/>
    <property type="resolution" value="1.65 A"/>
    <property type="chains" value="H=20-116"/>
</dbReference>
<dbReference type="PDB" id="5A2K">
    <property type="method" value="X-ray"/>
    <property type="resolution" value="1.70 A"/>
    <property type="chains" value="H=20-129"/>
</dbReference>
<dbReference type="PDB" id="5A2L">
    <property type="method" value="X-ray"/>
    <property type="resolution" value="1.79 A"/>
    <property type="chains" value="H=20-129"/>
</dbReference>
<dbReference type="PDB" id="5N7B">
    <property type="method" value="X-ray"/>
    <property type="resolution" value="1.70 A"/>
    <property type="chains" value="H=19-129"/>
</dbReference>
<dbReference type="PDBsum" id="5A2I"/>
<dbReference type="PDBsum" id="5A2J"/>
<dbReference type="PDBsum" id="5A2K"/>
<dbReference type="PDBsum" id="5A2L"/>
<dbReference type="PDBsum" id="5N7B"/>
<dbReference type="SMR" id="P01727"/>
<dbReference type="FunCoup" id="P01727">
    <property type="interactions" value="784"/>
</dbReference>
<dbReference type="MINT" id="P01727"/>
<dbReference type="InParanoid" id="P01727"/>
<dbReference type="EvolutionaryTrace" id="P01727"/>
<dbReference type="Proteomes" id="UP000000589">
    <property type="component" value="Unplaced"/>
</dbReference>
<dbReference type="RNAct" id="P01727">
    <property type="molecule type" value="protein"/>
</dbReference>
<dbReference type="GO" id="GO:0019814">
    <property type="term" value="C:immunoglobulin complex"/>
    <property type="evidence" value="ECO:0000318"/>
    <property type="project" value="GO_Central"/>
</dbReference>
<dbReference type="GO" id="GO:0002250">
    <property type="term" value="P:adaptive immune response"/>
    <property type="evidence" value="ECO:0007669"/>
    <property type="project" value="UniProtKB-KW"/>
</dbReference>
<dbReference type="GO" id="GO:0006955">
    <property type="term" value="P:immune response"/>
    <property type="evidence" value="ECO:0000318"/>
    <property type="project" value="GO_Central"/>
</dbReference>
<dbReference type="CDD" id="cd04984">
    <property type="entry name" value="IgV_L_lambda"/>
    <property type="match status" value="1"/>
</dbReference>
<dbReference type="FunFam" id="2.60.40.10:FF:002073">
    <property type="entry name" value="Ig lambda-1 chain V regions MOPC 104E/RPC20/J558/S104"/>
    <property type="match status" value="1"/>
</dbReference>
<dbReference type="Gene3D" id="2.60.40.10">
    <property type="entry name" value="Immunoglobulins"/>
    <property type="match status" value="1"/>
</dbReference>
<dbReference type="InterPro" id="IPR007110">
    <property type="entry name" value="Ig-like_dom"/>
</dbReference>
<dbReference type="InterPro" id="IPR036179">
    <property type="entry name" value="Ig-like_dom_sf"/>
</dbReference>
<dbReference type="InterPro" id="IPR013783">
    <property type="entry name" value="Ig-like_fold"/>
</dbReference>
<dbReference type="InterPro" id="IPR003599">
    <property type="entry name" value="Ig_sub"/>
</dbReference>
<dbReference type="InterPro" id="IPR013106">
    <property type="entry name" value="Ig_V-set"/>
</dbReference>
<dbReference type="InterPro" id="IPR050150">
    <property type="entry name" value="IgV_Light_Chain"/>
</dbReference>
<dbReference type="PANTHER" id="PTHR23267">
    <property type="entry name" value="IMMUNOGLOBULIN LIGHT CHAIN"/>
    <property type="match status" value="1"/>
</dbReference>
<dbReference type="Pfam" id="PF07686">
    <property type="entry name" value="V-set"/>
    <property type="match status" value="1"/>
</dbReference>
<dbReference type="SMART" id="SM00409">
    <property type="entry name" value="IG"/>
    <property type="match status" value="1"/>
</dbReference>
<dbReference type="SMART" id="SM00406">
    <property type="entry name" value="IGv"/>
    <property type="match status" value="1"/>
</dbReference>
<dbReference type="SUPFAM" id="SSF48726">
    <property type="entry name" value="Immunoglobulin"/>
    <property type="match status" value="1"/>
</dbReference>
<dbReference type="PROSITE" id="PS50835">
    <property type="entry name" value="IG_LIKE"/>
    <property type="match status" value="1"/>
</dbReference>
<reference key="1">
    <citation type="journal article" date="1982" name="Nature">
        <title>Somatic variants of murine immunoglobulin lambda light chains.</title>
        <authorList>
            <person name="Bothwell A.L.M."/>
            <person name="Paskind M."/>
            <person name="Reth M."/>
            <person name="Imanishi-Kari T."/>
            <person name="Rajewsky K."/>
            <person name="Baltimore D."/>
        </authorList>
    </citation>
    <scope>NUCLEOTIDE SEQUENCE</scope>
</reference>
<proteinExistence type="evidence at protein level"/>
<accession>P01727</accession>
<keyword id="KW-0002">3D-structure</keyword>
<keyword id="KW-1064">Adaptive immunity</keyword>
<keyword id="KW-0391">Immunity</keyword>
<keyword id="KW-1280">Immunoglobulin</keyword>
<keyword id="KW-0873">Pyrrolidone carboxylic acid</keyword>
<keyword id="KW-1185">Reference proteome</keyword>
<keyword id="KW-0732">Signal</keyword>
<protein>
    <recommendedName>
        <fullName>Ig lambda-1 chain V region S43</fullName>
    </recommendedName>
</protein>
<name>LV1E_MOUSE</name>
<evidence type="ECO:0000250" key="1">
    <source>
        <dbReference type="UniProtKB" id="P01724"/>
    </source>
</evidence>
<evidence type="ECO:0007829" key="2">
    <source>
        <dbReference type="PDB" id="5A2J"/>
    </source>
</evidence>
<sequence>MAWISLILSLLALSSGAISQAVVTQESALTTSPGETVTLTCRSSTGAVTTSNYANWVQEKPDHLFTGLIGGTNNRAPGVPARFSGSLIGDKAALTITGTQTEDEAMYFCALWYSNHWVFGGGTKLTVLG</sequence>
<feature type="signal peptide">
    <location>
        <begin position="1"/>
        <end position="19"/>
    </location>
</feature>
<feature type="chain" id="PRO_0000015204" description="Ig lambda-1 chain V region S43">
    <location>
        <begin position="20"/>
        <end position="129"/>
    </location>
</feature>
<feature type="domain" description="Ig-like">
    <location>
        <begin position="20"/>
        <end position="125"/>
    </location>
</feature>
<feature type="modified residue" description="Pyrrolidone carboxylic acid" evidence="1">
    <location>
        <position position="20"/>
    </location>
</feature>
<feature type="non-terminal residue">
    <location>
        <position position="129"/>
    </location>
</feature>
<feature type="strand" evidence="2">
    <location>
        <begin position="23"/>
        <end position="25"/>
    </location>
</feature>
<feature type="strand" evidence="2">
    <location>
        <begin position="27"/>
        <end position="31"/>
    </location>
</feature>
<feature type="strand" evidence="2">
    <location>
        <begin position="36"/>
        <end position="43"/>
    </location>
</feature>
<feature type="helix" evidence="2">
    <location>
        <begin position="50"/>
        <end position="52"/>
    </location>
</feature>
<feature type="strand" evidence="2">
    <location>
        <begin position="55"/>
        <end position="60"/>
    </location>
</feature>
<feature type="turn" evidence="2">
    <location>
        <begin position="61"/>
        <end position="63"/>
    </location>
</feature>
<feature type="strand" evidence="2">
    <location>
        <begin position="64"/>
        <end position="70"/>
    </location>
</feature>
<feature type="turn" evidence="2">
    <location>
        <begin position="71"/>
        <end position="73"/>
    </location>
</feature>
<feature type="strand" evidence="2">
    <location>
        <begin position="83"/>
        <end position="88"/>
    </location>
</feature>
<feature type="strand" evidence="2">
    <location>
        <begin position="91"/>
        <end position="98"/>
    </location>
</feature>
<feature type="helix" evidence="2">
    <location>
        <begin position="101"/>
        <end position="103"/>
    </location>
</feature>
<feature type="strand" evidence="2">
    <location>
        <begin position="105"/>
        <end position="112"/>
    </location>
</feature>
<feature type="strand" evidence="2">
    <location>
        <begin position="117"/>
        <end position="119"/>
    </location>
</feature>
<feature type="strand" evidence="2">
    <location>
        <begin position="123"/>
        <end position="127"/>
    </location>
</feature>